<reference key="1">
    <citation type="journal article" date="2006" name="PLoS Biol.">
        <title>The genome of deep-sea vent chemolithoautotroph Thiomicrospira crunogena XCL-2.</title>
        <authorList>
            <person name="Scott K.M."/>
            <person name="Sievert S.M."/>
            <person name="Abril F.N."/>
            <person name="Ball L.A."/>
            <person name="Barrett C.J."/>
            <person name="Blake R.A."/>
            <person name="Boller A.J."/>
            <person name="Chain P.S.G."/>
            <person name="Clark J.A."/>
            <person name="Davis C.R."/>
            <person name="Detter C."/>
            <person name="Do K.F."/>
            <person name="Dobrinski K.P."/>
            <person name="Faza B.I."/>
            <person name="Fitzpatrick K.A."/>
            <person name="Freyermuth S.K."/>
            <person name="Harmer T.L."/>
            <person name="Hauser L.J."/>
            <person name="Huegler M."/>
            <person name="Kerfeld C.A."/>
            <person name="Klotz M.G."/>
            <person name="Kong W.W."/>
            <person name="Land M."/>
            <person name="Lapidus A."/>
            <person name="Larimer F.W."/>
            <person name="Longo D.L."/>
            <person name="Lucas S."/>
            <person name="Malfatti S.A."/>
            <person name="Massey S.E."/>
            <person name="Martin D.D."/>
            <person name="McCuddin Z."/>
            <person name="Meyer F."/>
            <person name="Moore J.L."/>
            <person name="Ocampo L.H. Jr."/>
            <person name="Paul J.H."/>
            <person name="Paulsen I.T."/>
            <person name="Reep D.K."/>
            <person name="Ren Q."/>
            <person name="Ross R.L."/>
            <person name="Sato P.Y."/>
            <person name="Thomas P."/>
            <person name="Tinkham L.E."/>
            <person name="Zeruth G.T."/>
        </authorList>
    </citation>
    <scope>NUCLEOTIDE SEQUENCE [LARGE SCALE GENOMIC DNA]</scope>
    <source>
        <strain>DSM 25203 / XCL-2</strain>
    </source>
</reference>
<dbReference type="EC" id="2.1.1.242" evidence="1"/>
<dbReference type="EMBL" id="CP000109">
    <property type="protein sequence ID" value="ABB42580.1"/>
    <property type="molecule type" value="Genomic_DNA"/>
</dbReference>
<dbReference type="SMR" id="Q31E43"/>
<dbReference type="STRING" id="317025.Tcr_1990"/>
<dbReference type="KEGG" id="tcx:Tcr_1990"/>
<dbReference type="eggNOG" id="COG0742">
    <property type="taxonomic scope" value="Bacteria"/>
</dbReference>
<dbReference type="HOGENOM" id="CLU_076324_0_1_6"/>
<dbReference type="OrthoDB" id="3191794at2"/>
<dbReference type="GO" id="GO:0005737">
    <property type="term" value="C:cytoplasm"/>
    <property type="evidence" value="ECO:0007669"/>
    <property type="project" value="UniProtKB-SubCell"/>
</dbReference>
<dbReference type="GO" id="GO:0008990">
    <property type="term" value="F:rRNA (guanine-N2-)-methyltransferase activity"/>
    <property type="evidence" value="ECO:0007669"/>
    <property type="project" value="UniProtKB-UniRule"/>
</dbReference>
<dbReference type="CDD" id="cd02440">
    <property type="entry name" value="AdoMet_MTases"/>
    <property type="match status" value="1"/>
</dbReference>
<dbReference type="Gene3D" id="3.40.50.150">
    <property type="entry name" value="Vaccinia Virus protein VP39"/>
    <property type="match status" value="1"/>
</dbReference>
<dbReference type="HAMAP" id="MF_01523">
    <property type="entry name" value="16SrRNA_methyltr_J"/>
    <property type="match status" value="1"/>
</dbReference>
<dbReference type="InterPro" id="IPR007536">
    <property type="entry name" value="16SrRNA_methylTrfase_J"/>
</dbReference>
<dbReference type="InterPro" id="IPR029063">
    <property type="entry name" value="SAM-dependent_MTases_sf"/>
</dbReference>
<dbReference type="PANTHER" id="PTHR36112">
    <property type="entry name" value="RIBOSOMAL RNA SMALL SUBUNIT METHYLTRANSFERASE J"/>
    <property type="match status" value="1"/>
</dbReference>
<dbReference type="PANTHER" id="PTHR36112:SF1">
    <property type="entry name" value="RIBOSOMAL RNA SMALL SUBUNIT METHYLTRANSFERASE J"/>
    <property type="match status" value="1"/>
</dbReference>
<dbReference type="Pfam" id="PF04445">
    <property type="entry name" value="SAM_MT"/>
    <property type="match status" value="1"/>
</dbReference>
<dbReference type="SUPFAM" id="SSF53335">
    <property type="entry name" value="S-adenosyl-L-methionine-dependent methyltransferases"/>
    <property type="match status" value="1"/>
</dbReference>
<name>RSMJ_HYDCU</name>
<evidence type="ECO:0000255" key="1">
    <source>
        <dbReference type="HAMAP-Rule" id="MF_01523"/>
    </source>
</evidence>
<feature type="chain" id="PRO_0000244286" description="Ribosomal RNA small subunit methyltransferase J">
    <location>
        <begin position="1"/>
        <end position="276"/>
    </location>
</feature>
<feature type="binding site" evidence="1">
    <location>
        <begin position="135"/>
        <end position="136"/>
    </location>
    <ligand>
        <name>S-adenosyl-L-methionine</name>
        <dbReference type="ChEBI" id="CHEBI:59789"/>
    </ligand>
</feature>
<feature type="binding site" evidence="1">
    <location>
        <position position="191"/>
    </location>
    <ligand>
        <name>S-adenosyl-L-methionine</name>
        <dbReference type="ChEBI" id="CHEBI:59789"/>
    </ligand>
</feature>
<proteinExistence type="inferred from homology"/>
<protein>
    <recommendedName>
        <fullName evidence="1">Ribosomal RNA small subunit methyltransferase J</fullName>
        <ecNumber evidence="1">2.1.1.242</ecNumber>
    </recommendedName>
    <alternativeName>
        <fullName evidence="1">16S rRNA m2G1516 methyltransferase</fullName>
    </alternativeName>
    <alternativeName>
        <fullName evidence="1">rRNA (guanine-N(2)-)-methyltransferase</fullName>
    </alternativeName>
</protein>
<keyword id="KW-0963">Cytoplasm</keyword>
<keyword id="KW-0489">Methyltransferase</keyword>
<keyword id="KW-0698">rRNA processing</keyword>
<keyword id="KW-0949">S-adenosyl-L-methionine</keyword>
<keyword id="KW-0808">Transferase</keyword>
<sequence>MQTSSFPIVIDDHLLPDKAHALAQQLNLPLISATEAEKSAPLMKLGWWQDGKKSGDHTNEIDYKLALFPPSTGPVCIDFVSGKKNHRRQFGGGKGQPLARAVLAAEHPTIIDATAGMGGDAFVFASLGCQVTMIERSPIIAALLSDALNRAQQTGVAEDIQEIVKRLRLINDDATQYLTTQAPICDVIYLDPMYPEKKKTAATKKEMQALQHLVGPDIDSETLLAAALHVAQKRVVVKRPKNAPALTGIQPNASIQSPNTRYDIYAIKALKAAGKL</sequence>
<organism>
    <name type="scientific">Hydrogenovibrio crunogenus (strain DSM 25203 / XCL-2)</name>
    <name type="common">Thiomicrospira crunogena</name>
    <dbReference type="NCBI Taxonomy" id="317025"/>
    <lineage>
        <taxon>Bacteria</taxon>
        <taxon>Pseudomonadati</taxon>
        <taxon>Pseudomonadota</taxon>
        <taxon>Gammaproteobacteria</taxon>
        <taxon>Thiotrichales</taxon>
        <taxon>Piscirickettsiaceae</taxon>
        <taxon>Hydrogenovibrio</taxon>
    </lineage>
</organism>
<comment type="function">
    <text evidence="1">Specifically methylates the guanosine in position 1516 of 16S rRNA.</text>
</comment>
<comment type="catalytic activity">
    <reaction evidence="1">
        <text>guanosine(1516) in 16S rRNA + S-adenosyl-L-methionine = N(2)-methylguanosine(1516) in 16S rRNA + S-adenosyl-L-homocysteine + H(+)</text>
        <dbReference type="Rhea" id="RHEA:43220"/>
        <dbReference type="Rhea" id="RHEA-COMP:10412"/>
        <dbReference type="Rhea" id="RHEA-COMP:10413"/>
        <dbReference type="ChEBI" id="CHEBI:15378"/>
        <dbReference type="ChEBI" id="CHEBI:57856"/>
        <dbReference type="ChEBI" id="CHEBI:59789"/>
        <dbReference type="ChEBI" id="CHEBI:74269"/>
        <dbReference type="ChEBI" id="CHEBI:74481"/>
        <dbReference type="EC" id="2.1.1.242"/>
    </reaction>
</comment>
<comment type="subcellular location">
    <subcellularLocation>
        <location evidence="1">Cytoplasm</location>
    </subcellularLocation>
</comment>
<comment type="similarity">
    <text evidence="1">Belongs to the methyltransferase superfamily. RsmJ family.</text>
</comment>
<accession>Q31E43</accession>
<gene>
    <name evidence="1" type="primary">rsmJ</name>
    <name type="ordered locus">Tcr_1990</name>
</gene>